<feature type="chain" id="PRO_0000272226" description="F-box/kelch-repeat protein SKIP4">
    <location>
        <begin position="1"/>
        <end position="358"/>
    </location>
</feature>
<feature type="domain" description="F-box">
    <location>
        <begin position="20"/>
        <end position="67"/>
    </location>
</feature>
<feature type="repeat" description="Kelch 1">
    <location>
        <begin position="78"/>
        <end position="122"/>
    </location>
</feature>
<feature type="repeat" description="Kelch 2">
    <location>
        <begin position="123"/>
        <end position="171"/>
    </location>
</feature>
<feature type="repeat" description="Kelch 3">
    <location>
        <begin position="173"/>
        <end position="219"/>
    </location>
</feature>
<feature type="repeat" description="Kelch 4">
    <location>
        <begin position="220"/>
        <end position="269"/>
    </location>
</feature>
<feature type="repeat" description="Kelch 5">
    <location>
        <begin position="271"/>
        <end position="307"/>
    </location>
</feature>
<feature type="repeat" description="Kelch 6">
    <location>
        <begin position="308"/>
        <end position="355"/>
    </location>
</feature>
<feature type="sequence conflict" description="In Ref. 3; BAC43717." evidence="3" ref="3">
    <original>N</original>
    <variation>S</variation>
    <location>
        <position position="329"/>
    </location>
</feature>
<evidence type="ECO:0000250" key="1"/>
<evidence type="ECO:0000269" key="2">
    <source>
    </source>
</evidence>
<evidence type="ECO:0000305" key="3"/>
<gene>
    <name type="primary">SKIP4</name>
    <name type="ordered locus">At3g61350</name>
    <name type="ORF">T20K12.250</name>
</gene>
<comment type="pathway">
    <text>Protein modification; protein ubiquitination.</text>
</comment>
<comment type="subunit">
    <text evidence="1 2">Part of a SCF (SKP1-cullin-F-box) protein ligase complex (By similarity). Interacts with SKP1A/ASK1.</text>
</comment>
<comment type="sequence caution" evidence="3">
    <conflict type="erroneous initiation">
        <sequence resource="EMBL-CDS" id="AAG21979"/>
    </conflict>
</comment>
<proteinExistence type="evidence at protein level"/>
<name>SKIP4_ARATH</name>
<protein>
    <recommendedName>
        <fullName>F-box/kelch-repeat protein SKIP4</fullName>
    </recommendedName>
    <alternativeName>
        <fullName>SKP1-interacting partner 4</fullName>
    </alternativeName>
</protein>
<sequence length="358" mass="40118">MACIVEDPQRAGQSNETQIALISGVPDDISKSCLARVPREYHMAMKCVSRRWRDFVCSDEMCDYRNEFNLAESWIYALCRDISGGVFLHMLNPFSSRRSWKRINDYPYIPMREGMGFAVLGKRLFVLGGCGWLEDATDEIYCYDAAMNTWFDVVPPLSTKRCYFACETLDGKIIAIGGLGLNPNAKRTWDIYDPLTRTCKSCSDVNIVPEMEDSFVMDGRIYIRGGVGGSSTAVYSASSGIWERMDDDMASGWRGPAVVVAGDLYVLDQTFGAKLTMWCKDTRMWIHIGKLSQLVMKQPCRLVSIGNSIFVIGKDCSTVVIDVENVRKNKMNGVMVCSSIPKTWDDDIDVISCKSVAI</sequence>
<dbReference type="EMBL" id="AL137898">
    <property type="protein sequence ID" value="CAB71065.1"/>
    <property type="molecule type" value="Genomic_DNA"/>
</dbReference>
<dbReference type="EMBL" id="CP002686">
    <property type="protein sequence ID" value="AEE80189.1"/>
    <property type="molecule type" value="Genomic_DNA"/>
</dbReference>
<dbReference type="EMBL" id="CP002686">
    <property type="protein sequence ID" value="ANM65048.1"/>
    <property type="molecule type" value="Genomic_DNA"/>
</dbReference>
<dbReference type="EMBL" id="AK119147">
    <property type="protein sequence ID" value="BAC43717.1"/>
    <property type="molecule type" value="mRNA"/>
</dbReference>
<dbReference type="EMBL" id="BT025245">
    <property type="protein sequence ID" value="ABF18998.1"/>
    <property type="molecule type" value="mRNA"/>
</dbReference>
<dbReference type="EMBL" id="AF263380">
    <property type="protein sequence ID" value="AAG21979.1"/>
    <property type="status" value="ALT_INIT"/>
    <property type="molecule type" value="mRNA"/>
</dbReference>
<dbReference type="PIR" id="T47927">
    <property type="entry name" value="T47927"/>
</dbReference>
<dbReference type="RefSeq" id="NP_001327045.1">
    <property type="nucleotide sequence ID" value="NM_001340087.1"/>
</dbReference>
<dbReference type="RefSeq" id="NP_567112.1">
    <property type="nucleotide sequence ID" value="NM_115999.5"/>
</dbReference>
<dbReference type="SMR" id="Q9M2C9"/>
<dbReference type="BioGRID" id="10621">
    <property type="interactions" value="1"/>
</dbReference>
<dbReference type="FunCoup" id="Q9M2C9">
    <property type="interactions" value="268"/>
</dbReference>
<dbReference type="PaxDb" id="3702-AT3G61350.1"/>
<dbReference type="ProteomicsDB" id="232622"/>
<dbReference type="EnsemblPlants" id="AT3G61350.1">
    <property type="protein sequence ID" value="AT3G61350.1"/>
    <property type="gene ID" value="AT3G61350"/>
</dbReference>
<dbReference type="EnsemblPlants" id="AT3G61350.2">
    <property type="protein sequence ID" value="AT3G61350.2"/>
    <property type="gene ID" value="AT3G61350"/>
</dbReference>
<dbReference type="GeneID" id="825307"/>
<dbReference type="Gramene" id="AT3G61350.1">
    <property type="protein sequence ID" value="AT3G61350.1"/>
    <property type="gene ID" value="AT3G61350"/>
</dbReference>
<dbReference type="Gramene" id="AT3G61350.2">
    <property type="protein sequence ID" value="AT3G61350.2"/>
    <property type="gene ID" value="AT3G61350"/>
</dbReference>
<dbReference type="KEGG" id="ath:AT3G61350"/>
<dbReference type="Araport" id="AT3G61350"/>
<dbReference type="TAIR" id="AT3G61350">
    <property type="gene designation" value="SKIP4"/>
</dbReference>
<dbReference type="eggNOG" id="KOG1072">
    <property type="taxonomic scope" value="Eukaryota"/>
</dbReference>
<dbReference type="HOGENOM" id="CLU_776956_0_0_1"/>
<dbReference type="InParanoid" id="Q9M2C9"/>
<dbReference type="OMA" id="CYFACEA"/>
<dbReference type="OrthoDB" id="68328at2759"/>
<dbReference type="PhylomeDB" id="Q9M2C9"/>
<dbReference type="UniPathway" id="UPA00143"/>
<dbReference type="PRO" id="PR:Q9M2C9"/>
<dbReference type="Proteomes" id="UP000006548">
    <property type="component" value="Chromosome 3"/>
</dbReference>
<dbReference type="ExpressionAtlas" id="Q9M2C9">
    <property type="expression patterns" value="baseline and differential"/>
</dbReference>
<dbReference type="GO" id="GO:0016567">
    <property type="term" value="P:protein ubiquitination"/>
    <property type="evidence" value="ECO:0007669"/>
    <property type="project" value="UniProtKB-UniPathway"/>
</dbReference>
<dbReference type="GO" id="GO:0009409">
    <property type="term" value="P:response to cold"/>
    <property type="evidence" value="ECO:0000270"/>
    <property type="project" value="TAIR"/>
</dbReference>
<dbReference type="CDD" id="cd22152">
    <property type="entry name" value="F-box_AtAFR-like"/>
    <property type="match status" value="1"/>
</dbReference>
<dbReference type="Gene3D" id="2.120.10.80">
    <property type="entry name" value="Kelch-type beta propeller"/>
    <property type="match status" value="1"/>
</dbReference>
<dbReference type="InterPro" id="IPR036047">
    <property type="entry name" value="F-box-like_dom_sf"/>
</dbReference>
<dbReference type="InterPro" id="IPR001810">
    <property type="entry name" value="F-box_dom"/>
</dbReference>
<dbReference type="InterPro" id="IPR015915">
    <property type="entry name" value="Kelch-typ_b-propeller"/>
</dbReference>
<dbReference type="InterPro" id="IPR006652">
    <property type="entry name" value="Kelch_1"/>
</dbReference>
<dbReference type="PANTHER" id="PTHR46344:SF26">
    <property type="entry name" value="F-BOX DOMAIN-CONTAINING PROTEIN"/>
    <property type="match status" value="1"/>
</dbReference>
<dbReference type="PANTHER" id="PTHR46344">
    <property type="entry name" value="OS02G0202900 PROTEIN"/>
    <property type="match status" value="1"/>
</dbReference>
<dbReference type="Pfam" id="PF00646">
    <property type="entry name" value="F-box"/>
    <property type="match status" value="1"/>
</dbReference>
<dbReference type="Pfam" id="PF01344">
    <property type="entry name" value="Kelch_1"/>
    <property type="match status" value="2"/>
</dbReference>
<dbReference type="SMART" id="SM00612">
    <property type="entry name" value="Kelch"/>
    <property type="match status" value="2"/>
</dbReference>
<dbReference type="SUPFAM" id="SSF81383">
    <property type="entry name" value="F-box domain"/>
    <property type="match status" value="1"/>
</dbReference>
<dbReference type="SUPFAM" id="SSF117281">
    <property type="entry name" value="Kelch motif"/>
    <property type="match status" value="1"/>
</dbReference>
<organism>
    <name type="scientific">Arabidopsis thaliana</name>
    <name type="common">Mouse-ear cress</name>
    <dbReference type="NCBI Taxonomy" id="3702"/>
    <lineage>
        <taxon>Eukaryota</taxon>
        <taxon>Viridiplantae</taxon>
        <taxon>Streptophyta</taxon>
        <taxon>Embryophyta</taxon>
        <taxon>Tracheophyta</taxon>
        <taxon>Spermatophyta</taxon>
        <taxon>Magnoliopsida</taxon>
        <taxon>eudicotyledons</taxon>
        <taxon>Gunneridae</taxon>
        <taxon>Pentapetalae</taxon>
        <taxon>rosids</taxon>
        <taxon>malvids</taxon>
        <taxon>Brassicales</taxon>
        <taxon>Brassicaceae</taxon>
        <taxon>Camelineae</taxon>
        <taxon>Arabidopsis</taxon>
    </lineage>
</organism>
<reference key="1">
    <citation type="journal article" date="2000" name="Nature">
        <title>Sequence and analysis of chromosome 3 of the plant Arabidopsis thaliana.</title>
        <authorList>
            <person name="Salanoubat M."/>
            <person name="Lemcke K."/>
            <person name="Rieger M."/>
            <person name="Ansorge W."/>
            <person name="Unseld M."/>
            <person name="Fartmann B."/>
            <person name="Valle G."/>
            <person name="Bloecker H."/>
            <person name="Perez-Alonso M."/>
            <person name="Obermaier B."/>
            <person name="Delseny M."/>
            <person name="Boutry M."/>
            <person name="Grivell L.A."/>
            <person name="Mache R."/>
            <person name="Puigdomenech P."/>
            <person name="De Simone V."/>
            <person name="Choisne N."/>
            <person name="Artiguenave F."/>
            <person name="Robert C."/>
            <person name="Brottier P."/>
            <person name="Wincker P."/>
            <person name="Cattolico L."/>
            <person name="Weissenbach J."/>
            <person name="Saurin W."/>
            <person name="Quetier F."/>
            <person name="Schaefer M."/>
            <person name="Mueller-Auer S."/>
            <person name="Gabel C."/>
            <person name="Fuchs M."/>
            <person name="Benes V."/>
            <person name="Wurmbach E."/>
            <person name="Drzonek H."/>
            <person name="Erfle H."/>
            <person name="Jordan N."/>
            <person name="Bangert S."/>
            <person name="Wiedelmann R."/>
            <person name="Kranz H."/>
            <person name="Voss H."/>
            <person name="Holland R."/>
            <person name="Brandt P."/>
            <person name="Nyakatura G."/>
            <person name="Vezzi A."/>
            <person name="D'Angelo M."/>
            <person name="Pallavicini A."/>
            <person name="Toppo S."/>
            <person name="Simionati B."/>
            <person name="Conrad A."/>
            <person name="Hornischer K."/>
            <person name="Kauer G."/>
            <person name="Loehnert T.-H."/>
            <person name="Nordsiek G."/>
            <person name="Reichelt J."/>
            <person name="Scharfe M."/>
            <person name="Schoen O."/>
            <person name="Bargues M."/>
            <person name="Terol J."/>
            <person name="Climent J."/>
            <person name="Navarro P."/>
            <person name="Collado C."/>
            <person name="Perez-Perez A."/>
            <person name="Ottenwaelder B."/>
            <person name="Duchemin D."/>
            <person name="Cooke R."/>
            <person name="Laudie M."/>
            <person name="Berger-Llauro C."/>
            <person name="Purnelle B."/>
            <person name="Masuy D."/>
            <person name="de Haan M."/>
            <person name="Maarse A.C."/>
            <person name="Alcaraz J.-P."/>
            <person name="Cottet A."/>
            <person name="Casacuberta E."/>
            <person name="Monfort A."/>
            <person name="Argiriou A."/>
            <person name="Flores M."/>
            <person name="Liguori R."/>
            <person name="Vitale D."/>
            <person name="Mannhaupt G."/>
            <person name="Haase D."/>
            <person name="Schoof H."/>
            <person name="Rudd S."/>
            <person name="Zaccaria P."/>
            <person name="Mewes H.-W."/>
            <person name="Mayer K.F.X."/>
            <person name="Kaul S."/>
            <person name="Town C.D."/>
            <person name="Koo H.L."/>
            <person name="Tallon L.J."/>
            <person name="Jenkins J."/>
            <person name="Rooney T."/>
            <person name="Rizzo M."/>
            <person name="Walts A."/>
            <person name="Utterback T."/>
            <person name="Fujii C.Y."/>
            <person name="Shea T.P."/>
            <person name="Creasy T.H."/>
            <person name="Haas B."/>
            <person name="Maiti R."/>
            <person name="Wu D."/>
            <person name="Peterson J."/>
            <person name="Van Aken S."/>
            <person name="Pai G."/>
            <person name="Militscher J."/>
            <person name="Sellers P."/>
            <person name="Gill J.E."/>
            <person name="Feldblyum T.V."/>
            <person name="Preuss D."/>
            <person name="Lin X."/>
            <person name="Nierman W.C."/>
            <person name="Salzberg S.L."/>
            <person name="White O."/>
            <person name="Venter J.C."/>
            <person name="Fraser C.M."/>
            <person name="Kaneko T."/>
            <person name="Nakamura Y."/>
            <person name="Sato S."/>
            <person name="Kato T."/>
            <person name="Asamizu E."/>
            <person name="Sasamoto S."/>
            <person name="Kimura T."/>
            <person name="Idesawa K."/>
            <person name="Kawashima K."/>
            <person name="Kishida Y."/>
            <person name="Kiyokawa C."/>
            <person name="Kohara M."/>
            <person name="Matsumoto M."/>
            <person name="Matsuno A."/>
            <person name="Muraki A."/>
            <person name="Nakayama S."/>
            <person name="Nakazaki N."/>
            <person name="Shinpo S."/>
            <person name="Takeuchi C."/>
            <person name="Wada T."/>
            <person name="Watanabe A."/>
            <person name="Yamada M."/>
            <person name="Yasuda M."/>
            <person name="Tabata S."/>
        </authorList>
    </citation>
    <scope>NUCLEOTIDE SEQUENCE [LARGE SCALE GENOMIC DNA]</scope>
    <source>
        <strain>cv. Columbia</strain>
    </source>
</reference>
<reference key="2">
    <citation type="journal article" date="2017" name="Plant J.">
        <title>Araport11: a complete reannotation of the Arabidopsis thaliana reference genome.</title>
        <authorList>
            <person name="Cheng C.Y."/>
            <person name="Krishnakumar V."/>
            <person name="Chan A.P."/>
            <person name="Thibaud-Nissen F."/>
            <person name="Schobel S."/>
            <person name="Town C.D."/>
        </authorList>
    </citation>
    <scope>GENOME REANNOTATION</scope>
    <source>
        <strain>cv. Columbia</strain>
    </source>
</reference>
<reference key="3">
    <citation type="journal article" date="2002" name="Science">
        <title>Functional annotation of a full-length Arabidopsis cDNA collection.</title>
        <authorList>
            <person name="Seki M."/>
            <person name="Narusaka M."/>
            <person name="Kamiya A."/>
            <person name="Ishida J."/>
            <person name="Satou M."/>
            <person name="Sakurai T."/>
            <person name="Nakajima M."/>
            <person name="Enju A."/>
            <person name="Akiyama K."/>
            <person name="Oono Y."/>
            <person name="Muramatsu M."/>
            <person name="Hayashizaki Y."/>
            <person name="Kawai J."/>
            <person name="Carninci P."/>
            <person name="Itoh M."/>
            <person name="Ishii Y."/>
            <person name="Arakawa T."/>
            <person name="Shibata K."/>
            <person name="Shinagawa A."/>
            <person name="Shinozaki K."/>
        </authorList>
    </citation>
    <scope>NUCLEOTIDE SEQUENCE [LARGE SCALE MRNA]</scope>
    <source>
        <strain>cv. Columbia</strain>
    </source>
</reference>
<reference key="4">
    <citation type="submission" date="2006-04" db="EMBL/GenBank/DDBJ databases">
        <title>Arabidopsis ORF clones.</title>
        <authorList>
            <person name="Shinn P."/>
            <person name="Chen H."/>
            <person name="Kim C.J."/>
            <person name="Quinitio C."/>
            <person name="Ecker J.R."/>
        </authorList>
    </citation>
    <scope>NUCLEOTIDE SEQUENCE [LARGE SCALE MRNA]</scope>
    <source>
        <strain>cv. Columbia</strain>
    </source>
</reference>
<reference key="5">
    <citation type="journal article" date="2001" name="EMBO J.">
        <title>SKP1-SnRK protein kinase interactions mediate proteasomal binding of a plant SCF ubiquitin ligase.</title>
        <authorList>
            <person name="Farras R."/>
            <person name="Ferrando A."/>
            <person name="Jasik J."/>
            <person name="Kleinow T."/>
            <person name="Oekresz L."/>
            <person name="Tiburcio A."/>
            <person name="Salchert K."/>
            <person name="del Pozo C."/>
            <person name="Schell J."/>
            <person name="Koncz C."/>
        </authorList>
    </citation>
    <scope>NUCLEOTIDE SEQUENCE [MRNA] OF 12-358</scope>
    <scope>INTERACTION WITH SKP1A/ASK1</scope>
</reference>
<accession>Q9M2C9</accession>
<accession>Q8GW14</accession>
<accession>Q9FV01</accession>
<keyword id="KW-0880">Kelch repeat</keyword>
<keyword id="KW-1185">Reference proteome</keyword>
<keyword id="KW-0677">Repeat</keyword>
<keyword id="KW-0833">Ubl conjugation pathway</keyword>